<name>AHPD_MYCTA</name>
<proteinExistence type="inferred from homology"/>
<protein>
    <recommendedName>
        <fullName evidence="2">Alkyl hydroperoxide reductase AhpD</fullName>
        <ecNumber evidence="2">1.11.1.28</ecNumber>
    </recommendedName>
    <alternativeName>
        <fullName evidence="2">Alkylhydroperoxidase AhpD</fullName>
    </alternativeName>
</protein>
<feature type="chain" id="PRO_0000359500" description="Alkyl hydroperoxide reductase AhpD">
    <location>
        <begin position="1"/>
        <end position="177"/>
    </location>
</feature>
<feature type="active site" description="Proton donor" evidence="2">
    <location>
        <position position="130"/>
    </location>
</feature>
<feature type="active site" description="Cysteine sulfenic acid (-SOH) intermediate" evidence="2">
    <location>
        <position position="133"/>
    </location>
</feature>
<feature type="disulfide bond" evidence="1">
    <location>
        <begin position="130"/>
        <end position="133"/>
    </location>
</feature>
<feature type="disulfide bond" description="Interchain (with AhpC); in linked form" evidence="2">
    <location>
        <position position="133"/>
    </location>
</feature>
<evidence type="ECO:0000250" key="1"/>
<evidence type="ECO:0000255" key="2">
    <source>
        <dbReference type="HAMAP-Rule" id="MF_01676"/>
    </source>
</evidence>
<reference key="1">
    <citation type="journal article" date="2008" name="PLoS ONE">
        <title>Genetic basis of virulence attenuation revealed by comparative genomic analysis of Mycobacterium tuberculosis strain H37Ra versus H37Rv.</title>
        <authorList>
            <person name="Zheng H."/>
            <person name="Lu L."/>
            <person name="Wang B."/>
            <person name="Pu S."/>
            <person name="Zhang X."/>
            <person name="Zhu G."/>
            <person name="Shi W."/>
            <person name="Zhang L."/>
            <person name="Wang H."/>
            <person name="Wang S."/>
            <person name="Zhao G."/>
            <person name="Zhang Y."/>
        </authorList>
    </citation>
    <scope>NUCLEOTIDE SEQUENCE [LARGE SCALE GENOMIC DNA]</scope>
    <source>
        <strain>ATCC 25177 / H37Ra</strain>
    </source>
</reference>
<gene>
    <name evidence="2" type="primary">ahpD</name>
    <name type="ordered locus">MRA_2456</name>
</gene>
<comment type="function">
    <text evidence="2">Antioxidant protein with alkyl hydroperoxidase activity. Required for the reduction of the AhpC active site cysteine residues and for the regeneration of the AhpC enzyme activity.</text>
</comment>
<comment type="catalytic activity">
    <reaction evidence="2">
        <text>N(6)-[(R)-dihydrolipoyl]-L-lysyl-[lipoyl-carrier protein] + a hydroperoxide = N(6)-[(R)-lipoyl]-L-lysyl-[lipoyl-carrier protein] + an alcohol + H2O</text>
        <dbReference type="Rhea" id="RHEA:62636"/>
        <dbReference type="Rhea" id="RHEA-COMP:10502"/>
        <dbReference type="Rhea" id="RHEA-COMP:16355"/>
        <dbReference type="ChEBI" id="CHEBI:15377"/>
        <dbReference type="ChEBI" id="CHEBI:30879"/>
        <dbReference type="ChEBI" id="CHEBI:35924"/>
        <dbReference type="ChEBI" id="CHEBI:83099"/>
        <dbReference type="ChEBI" id="CHEBI:83100"/>
        <dbReference type="EC" id="1.11.1.28"/>
    </reaction>
</comment>
<comment type="subunit">
    <text evidence="2">Homotrimer.</text>
</comment>
<comment type="similarity">
    <text evidence="2">Belongs to the AhpD family.</text>
</comment>
<sequence length="177" mass="18781">MSIEKLKAALPEYAKDIKLNLSSITRSSVLDQEQLWGTLLASAAATRNPQVLADIGAEATDHLSAAARHAALGAAAIMGMNNVFYRGRGFLEGRYDDLRPGLRMNIIANPGIPKANFELWSFAVSAINGCSHCLVAHEHTLRTVGVDREAIFEALKAAAIVSGVAQALATIEALSPS</sequence>
<accession>A5U5C5</accession>
<dbReference type="EC" id="1.11.1.28" evidence="2"/>
<dbReference type="EMBL" id="CP000611">
    <property type="protein sequence ID" value="ABQ74225.1"/>
    <property type="molecule type" value="Genomic_DNA"/>
</dbReference>
<dbReference type="RefSeq" id="WP_003412536.1">
    <property type="nucleotide sequence ID" value="NZ_CP016972.1"/>
</dbReference>
<dbReference type="SMR" id="A5U5C5"/>
<dbReference type="KEGG" id="mra:MRA_2456"/>
<dbReference type="eggNOG" id="COG0599">
    <property type="taxonomic scope" value="Bacteria"/>
</dbReference>
<dbReference type="HOGENOM" id="CLU_105328_0_0_11"/>
<dbReference type="Proteomes" id="UP000001988">
    <property type="component" value="Chromosome"/>
</dbReference>
<dbReference type="GO" id="GO:0008785">
    <property type="term" value="F:alkyl hydroperoxide reductase activity"/>
    <property type="evidence" value="ECO:0007669"/>
    <property type="project" value="UniProtKB-UniRule"/>
</dbReference>
<dbReference type="GO" id="GO:0015036">
    <property type="term" value="F:disulfide oxidoreductase activity"/>
    <property type="evidence" value="ECO:0007669"/>
    <property type="project" value="TreeGrafter"/>
</dbReference>
<dbReference type="GO" id="GO:0032843">
    <property type="term" value="F:hydroperoxide reductase activity"/>
    <property type="evidence" value="ECO:0007669"/>
    <property type="project" value="InterPro"/>
</dbReference>
<dbReference type="GO" id="GO:0051920">
    <property type="term" value="F:peroxiredoxin activity"/>
    <property type="evidence" value="ECO:0007669"/>
    <property type="project" value="InterPro"/>
</dbReference>
<dbReference type="GO" id="GO:0045454">
    <property type="term" value="P:cell redox homeostasis"/>
    <property type="evidence" value="ECO:0007669"/>
    <property type="project" value="TreeGrafter"/>
</dbReference>
<dbReference type="GO" id="GO:0006979">
    <property type="term" value="P:response to oxidative stress"/>
    <property type="evidence" value="ECO:0007669"/>
    <property type="project" value="InterPro"/>
</dbReference>
<dbReference type="FunFam" id="1.20.1290.10:FF:000004">
    <property type="entry name" value="Alkyl hydroperoxide reductase AhpD"/>
    <property type="match status" value="1"/>
</dbReference>
<dbReference type="Gene3D" id="1.20.1290.10">
    <property type="entry name" value="AhpD-like"/>
    <property type="match status" value="1"/>
</dbReference>
<dbReference type="HAMAP" id="MF_01676">
    <property type="entry name" value="AhpD"/>
    <property type="match status" value="1"/>
</dbReference>
<dbReference type="InterPro" id="IPR004674">
    <property type="entry name" value="AhpD"/>
</dbReference>
<dbReference type="InterPro" id="IPR029032">
    <property type="entry name" value="AhpD-like"/>
</dbReference>
<dbReference type="InterPro" id="IPR004675">
    <property type="entry name" value="AhpD_core"/>
</dbReference>
<dbReference type="InterPro" id="IPR003779">
    <property type="entry name" value="CMD-like"/>
</dbReference>
<dbReference type="NCBIfam" id="TIGR00777">
    <property type="entry name" value="ahpD"/>
    <property type="match status" value="1"/>
</dbReference>
<dbReference type="NCBIfam" id="TIGR00778">
    <property type="entry name" value="ahpD_dom"/>
    <property type="match status" value="1"/>
</dbReference>
<dbReference type="PANTHER" id="PTHR33930">
    <property type="entry name" value="ALKYL HYDROPEROXIDE REDUCTASE AHPD"/>
    <property type="match status" value="1"/>
</dbReference>
<dbReference type="PANTHER" id="PTHR33930:SF7">
    <property type="entry name" value="ALKYL HYDROPEROXIDE REDUCTASE AHPD"/>
    <property type="match status" value="1"/>
</dbReference>
<dbReference type="Pfam" id="PF02627">
    <property type="entry name" value="CMD"/>
    <property type="match status" value="1"/>
</dbReference>
<dbReference type="SUPFAM" id="SSF69118">
    <property type="entry name" value="AhpD-like"/>
    <property type="match status" value="1"/>
</dbReference>
<organism>
    <name type="scientific">Mycobacterium tuberculosis (strain ATCC 25177 / H37Ra)</name>
    <dbReference type="NCBI Taxonomy" id="419947"/>
    <lineage>
        <taxon>Bacteria</taxon>
        <taxon>Bacillati</taxon>
        <taxon>Actinomycetota</taxon>
        <taxon>Actinomycetes</taxon>
        <taxon>Mycobacteriales</taxon>
        <taxon>Mycobacteriaceae</taxon>
        <taxon>Mycobacterium</taxon>
        <taxon>Mycobacterium tuberculosis complex</taxon>
    </lineage>
</organism>
<keyword id="KW-0049">Antioxidant</keyword>
<keyword id="KW-1015">Disulfide bond</keyword>
<keyword id="KW-0560">Oxidoreductase</keyword>
<keyword id="KW-0575">Peroxidase</keyword>
<keyword id="KW-0676">Redox-active center</keyword>
<keyword id="KW-1185">Reference proteome</keyword>